<comment type="function">
    <molecule>Capsid protein C</molecule>
    <text evidence="4">Plays a role in virus budding by binding to the cell membrane and gathering the viral RNA into a nucleocapsid that forms the core of a mature virus particle. During virus entry, may induce genome penetration into the host cytoplasm after hemifusion induced by the surface proteins. Can migrate to the cell nucleus where it modulates host functions.</text>
</comment>
<comment type="function">
    <molecule>Peptide pr</molecule>
    <text evidence="4">Prevents premature fusion activity of envelope proteins in trans-Golgi by binding to envelope protein E at pH6.0. After virion release in extracellular space, gets dissociated from E dimers.</text>
</comment>
<comment type="function">
    <molecule>Protein prM</molecule>
    <text evidence="4">Acts as a chaperone for envelope protein E during intracellular virion assembly by masking and inactivating envelope protein E fusion peptide. prM is the only viral peptide matured by host furin in the trans-Golgi network probably to avoid catastrophic activation of the viral fusion activity in acidic Golgi compartment prior to virion release. prM-E cleavage is inefficient, and many virions are only partially matured. These uncleaved prM would play a role in immune evasion.</text>
</comment>
<comment type="function">
    <molecule>Small envelope protein M</molecule>
    <text evidence="4">May play a role in virus budding. Exerts cytotoxic effects by activating a mitochondrial apoptotic pathway through M ectodomain. May display a viroporin activity.</text>
</comment>
<comment type="function">
    <molecule>Envelope protein E</molecule>
    <text evidence="4">Binds to host cell surface receptor and mediates fusion between viral and cellular membranes. Envelope protein is synthesized in the endoplasmic reticulum in the form of heterodimer with protein prM. They play a role in virion budding in the ER, and the newly formed immature particle is covered with 60 spikes composed of heterodimer between precursor prM and envelope protein E. The virion is transported to the Golgi apparatus where the low pH causes dissociation of PrM-E heterodimers and formation of E homodimers. prM-E cleavage is inefficient, and many virions are only partially matured. These uncleaved prM would play a role in immune evasion.</text>
</comment>
<comment type="function">
    <molecule>Non-structural protein 1</molecule>
    <text evidence="4">Involved in immune evasion, pathogenesis and viral replication. Once cleaved off the polyprotein, is targeted to three destinations: the viral replication cycle, the plasma membrane and the extracellular compartment. May play a role in viral genome replication. Assist membrane bending and envelopment of genomic RNA at the endoplasmic reticulum. Excreted as a hexameric lipoparticle that plays a role against host immune response.</text>
</comment>
<comment type="function">
    <molecule>Non-structural protein 2A</molecule>
    <text evidence="4">Component of the viral RNA replication complex that functions in virion assembly and antagonizes the host immune response.</text>
</comment>
<comment type="function">
    <molecule>Serine protease subunit NS2B</molecule>
    <text evidence="4 13">Required cofactor for the serine protease function of NS3. May have membrane-destabilizing activity and form viroporins (By similarity).</text>
</comment>
<comment type="function">
    <molecule>Serine protease NS3</molecule>
    <text evidence="14">Displays three enzymatic activities: serine protease, NTPase and RNA helicase. NS3 serine protease, in association with NS2B, performs its autocleavage and cleaves the polyprotein at dibasic sites in the cytoplasm: C-prM, NS2A-NS2B, NS2B-NS3, NS3-NS4A, NS4A-2K and NS4B-NS5. NS3 RNA helicase binds RNA and unwinds dsRNA in the 3' to 5' direction.</text>
</comment>
<comment type="function">
    <molecule>Non-structural protein 4A</molecule>
    <text evidence="8">Regulates the ATPase activity of the NS3 helicase activity. NS4A allows NS3 helicase to conserve energy during unwinding.</text>
</comment>
<comment type="function">
    <molecule>Peptide 2k</molecule>
    <text evidence="4">Functions as a signal peptide for NS4B and is required for the interferon antagonism activity of the latter.</text>
</comment>
<comment type="function">
    <molecule>Non-structural protein 4B</molecule>
    <text evidence="4">Inhibits interferon (IFN)-induced host STAT1 phosphorylation and nuclear translocation, thereby preventing the establishment of a cellular antiviral state by blocking the IFN-alpha/beta pathway.</text>
</comment>
<comment type="function">
    <molecule>RNA-directed RNA polymerase NS5</molecule>
    <text evidence="4">Replicates the viral (+) and (-) RNA genome, and performs the capping of genomes in the cytoplasm. NS5 methylates viral RNA cap at guanine N-7 and ribose 2'-O positions. Besides its role in RNA genome replication, also prevents the establishment of cellular antiviral state by blocking the interferon-alpha/beta (IFN-alpha/beta) signaling pathway. Inhibits host TYK2 and STAT2 phosphorylation, thereby preventing activation of JAK-STAT signaling pathway.</text>
</comment>
<comment type="catalytic activity">
    <reaction>
        <text>Selective hydrolysis of -Xaa-Xaa-|-Yaa- bonds in which each of the Xaa can be either Arg or Lys and Yaa can be either Ser or Ala.</text>
        <dbReference type="EC" id="3.4.21.91"/>
    </reaction>
</comment>
<comment type="catalytic activity">
    <reaction evidence="10">
        <text>RNA(n) + a ribonucleoside 5'-triphosphate = RNA(n+1) + diphosphate</text>
        <dbReference type="Rhea" id="RHEA:21248"/>
        <dbReference type="Rhea" id="RHEA-COMP:14527"/>
        <dbReference type="Rhea" id="RHEA-COMP:17342"/>
        <dbReference type="ChEBI" id="CHEBI:33019"/>
        <dbReference type="ChEBI" id="CHEBI:61557"/>
        <dbReference type="ChEBI" id="CHEBI:140395"/>
        <dbReference type="EC" id="2.7.7.48"/>
    </reaction>
</comment>
<comment type="catalytic activity">
    <reaction>
        <text>a ribonucleoside 5'-triphosphate + H2O = a ribonucleoside 5'-diphosphate + phosphate + H(+)</text>
        <dbReference type="Rhea" id="RHEA:23680"/>
        <dbReference type="ChEBI" id="CHEBI:15377"/>
        <dbReference type="ChEBI" id="CHEBI:15378"/>
        <dbReference type="ChEBI" id="CHEBI:43474"/>
        <dbReference type="ChEBI" id="CHEBI:57930"/>
        <dbReference type="ChEBI" id="CHEBI:61557"/>
        <dbReference type="EC" id="3.6.1.15"/>
    </reaction>
</comment>
<comment type="catalytic activity">
    <reaction>
        <text>ATP + H2O = ADP + phosphate + H(+)</text>
        <dbReference type="Rhea" id="RHEA:13065"/>
        <dbReference type="ChEBI" id="CHEBI:15377"/>
        <dbReference type="ChEBI" id="CHEBI:15378"/>
        <dbReference type="ChEBI" id="CHEBI:30616"/>
        <dbReference type="ChEBI" id="CHEBI:43474"/>
        <dbReference type="ChEBI" id="CHEBI:456216"/>
        <dbReference type="EC" id="3.6.4.13"/>
    </reaction>
</comment>
<comment type="catalytic activity">
    <reaction evidence="15">
        <text>a 5'-end (5'-triphosphoguanosine)-ribonucleoside in mRNA + S-adenosyl-L-methionine = a 5'-end (N(7)-methyl 5'-triphosphoguanosine)-ribonucleoside in mRNA + S-adenosyl-L-homocysteine</text>
        <dbReference type="Rhea" id="RHEA:67008"/>
        <dbReference type="Rhea" id="RHEA-COMP:17166"/>
        <dbReference type="Rhea" id="RHEA-COMP:17167"/>
        <dbReference type="ChEBI" id="CHEBI:57856"/>
        <dbReference type="ChEBI" id="CHEBI:59789"/>
        <dbReference type="ChEBI" id="CHEBI:156461"/>
        <dbReference type="ChEBI" id="CHEBI:167617"/>
        <dbReference type="EC" id="2.1.1.56"/>
    </reaction>
</comment>
<comment type="catalytic activity">
    <reaction evidence="15">
        <text>a 5'-end (N(7)-methyl 5'-triphosphoguanosine)-ribonucleoside in mRNA + S-adenosyl-L-methionine = a 5'-end (N(7)-methyl 5'-triphosphoguanosine)-(2'-O-methyl-ribonucleoside) in mRNA + S-adenosyl-L-homocysteine + H(+)</text>
        <dbReference type="Rhea" id="RHEA:67020"/>
        <dbReference type="Rhea" id="RHEA-COMP:17167"/>
        <dbReference type="Rhea" id="RHEA-COMP:17168"/>
        <dbReference type="ChEBI" id="CHEBI:15378"/>
        <dbReference type="ChEBI" id="CHEBI:57856"/>
        <dbReference type="ChEBI" id="CHEBI:59789"/>
        <dbReference type="ChEBI" id="CHEBI:156461"/>
        <dbReference type="ChEBI" id="CHEBI:167609"/>
        <dbReference type="EC" id="2.1.1.57"/>
    </reaction>
</comment>
<comment type="subunit">
    <molecule>Capsid protein C</molecule>
    <text evidence="4">Homodimer.</text>
</comment>
<comment type="subunit">
    <molecule>Protein prM</molecule>
    <text evidence="4">Forms heterodimers with envelope protein E in the endoplasmic reticulum and Golgi.</text>
</comment>
<comment type="subunit">
    <molecule>Envelope protein E</molecule>
    <text evidence="4">Homodimer; in the endoplasmic reticulum and Golgi.</text>
</comment>
<comment type="subunit">
    <molecule>Non-structural protein 1</molecule>
    <text evidence="4">Forms homodimers as well as homohexamers. NS1 may interact with NS4A.</text>
</comment>
<comment type="subunit">
    <molecule>Serine protease subunit NS2B</molecule>
    <text evidence="4">Forms a heterodimer with serine protease NS3. May form homooligomers.</text>
</comment>
<comment type="subunit">
    <molecule>Serine protease NS3</molecule>
    <text evidence="4">Forms a heterodimer with NS2B. Interacts with NS4B. Interacts with unphosphorylated RNA-directed RNA polymerase NS5; this interaction stimulates RNA-directed RNA polymerase NS5 guanylyltransferase activity.</text>
</comment>
<comment type="subunit">
    <molecule>Non-structural protein 4B</molecule>
    <text evidence="4">Interacts with serine protease NS3.</text>
</comment>
<comment type="subunit">
    <molecule>RNA-directed RNA polymerase NS5</molecule>
    <text evidence="6">Interacts with host STAT2; this interaction inhibits the phosphorylation of the latter, and, when all viral proteins are present (polyprotein), targets STAT2 for degradation.</text>
</comment>
<comment type="subcellular location">
    <molecule>Capsid protein C</molecule>
    <subcellularLocation>
        <location evidence="4">Virion</location>
    </subcellularLocation>
    <subcellularLocation>
        <location evidence="4">Host nucleus</location>
    </subcellularLocation>
</comment>
<comment type="subcellular location">
    <molecule>Peptide pr</molecule>
    <subcellularLocation>
        <location evidence="4">Secreted</location>
    </subcellularLocation>
</comment>
<comment type="subcellular location">
    <molecule>Small envelope protein M</molecule>
    <subcellularLocation>
        <location evidence="4">Virion membrane</location>
        <topology evidence="9">Multi-pass membrane protein</topology>
    </subcellularLocation>
    <subcellularLocation>
        <location evidence="4">Host endoplasmic reticulum membrane</location>
        <topology evidence="9">Multi-pass membrane protein</topology>
    </subcellularLocation>
</comment>
<comment type="subcellular location">
    <molecule>Envelope protein E</molecule>
    <subcellularLocation>
        <location evidence="4">Virion membrane</location>
        <topology evidence="9">Multi-pass membrane protein</topology>
    </subcellularLocation>
    <subcellularLocation>
        <location evidence="4">Host endoplasmic reticulum membrane</location>
        <topology evidence="9">Multi-pass membrane protein</topology>
    </subcellularLocation>
</comment>
<comment type="subcellular location">
    <molecule>Non-structural protein 1</molecule>
    <subcellularLocation>
        <location evidence="4">Secreted</location>
    </subcellularLocation>
    <subcellularLocation>
        <location>Host endoplasmic reticulum membrane</location>
        <topology>Peripheral membrane protein</topology>
        <orientation evidence="4">Lumenal side</orientation>
    </subcellularLocation>
</comment>
<comment type="subcellular location">
    <molecule>Non-structural protein 2A</molecule>
    <subcellularLocation>
        <location evidence="4">Host endoplasmic reticulum membrane</location>
        <topology evidence="4">Multi-pass membrane protein</topology>
    </subcellularLocation>
</comment>
<comment type="subcellular location">
    <molecule>Serine protease subunit NS2B</molecule>
    <subcellularLocation>
        <location evidence="4">Host endoplasmic reticulum membrane</location>
        <topology evidence="4">Peripheral membrane protein</topology>
        <orientation evidence="4">Cytoplasmic side</orientation>
    </subcellularLocation>
</comment>
<comment type="subcellular location">
    <molecule>Serine protease NS3</molecule>
    <subcellularLocation>
        <location evidence="14">Host endoplasmic reticulum membrane</location>
        <topology evidence="14">Peripheral membrane protein</topology>
        <orientation evidence="14">Cytoplasmic side</orientation>
    </subcellularLocation>
    <text evidence="14">Remains non-covalently associated to serine protease subunit NS2B.</text>
</comment>
<comment type="subcellular location">
    <molecule>Non-structural protein 4A</molecule>
    <subcellularLocation>
        <location evidence="4">Host endoplasmic reticulum membrane</location>
        <topology evidence="4">Multi-pass membrane protein</topology>
    </subcellularLocation>
    <text evidence="4">Located in RE-associated vesicles hosting the replication complex.</text>
</comment>
<comment type="subcellular location">
    <molecule>Non-structural protein 4B</molecule>
    <subcellularLocation>
        <location evidence="4">Host endoplasmic reticulum membrane</location>
        <topology evidence="4">Multi-pass membrane protein</topology>
    </subcellularLocation>
</comment>
<comment type="subcellular location">
    <molecule>RNA-directed RNA polymerase NS5</molecule>
    <subcellularLocation>
        <location>Host endoplasmic reticulum membrane</location>
        <topology>Peripheral membrane protein</topology>
        <orientation>Cytoplasmic side</orientation>
    </subcellularLocation>
    <subcellularLocation>
        <location evidence="4">Host nucleus</location>
    </subcellularLocation>
    <text evidence="4">Located in RE-associated vesicles hosting the replication complex. NS5 protein is mainly localized in the nucleus rather than in ER vesicles.</text>
</comment>
<comment type="domain">
    <text evidence="4">The transmembrane domains of the small envelope protein M and envelope protein E contain an endoplasmic reticulum retention signal.</text>
</comment>
<comment type="PTM">
    <text evidence="4">Genome polyprotein: Specific enzymatic cleavages in vivo yield mature proteins. Cleavages in the lumen of endoplasmic reticulum are performed by host signal peptidase, whereas cleavages in the cytoplasmic side are performed by serine protease NS3. Signal cleavage at the 2K-4B site requires a prior NS3 protease-mediated cleavage at the 4A-2K site.</text>
</comment>
<comment type="PTM">
    <molecule>Protein prM</molecule>
    <text evidence="4">Cleaved in post-Golgi vesicles by a host furin, releasing the mature small envelope protein M, and peptide pr. This cleavage is incomplete as up to 30% of viral particles still carry uncleaved prM.</text>
</comment>
<comment type="PTM">
    <molecule>Envelope protein E</molecule>
    <text evidence="4">N-glycosylated.</text>
</comment>
<comment type="PTM">
    <molecule>Non-structural protein 1</molecule>
    <text evidence="4">N-glycosylated. The excreted form is glycosylated and this is required for efficient secretion of the protein from infected cells.</text>
</comment>
<comment type="PTM">
    <molecule>RNA-directed RNA polymerase NS5</molecule>
    <text evidence="4">Phosphorylated on serines residues. This phosphorylation may trigger NS5 nuclear localization.</text>
</comment>
<comment type="similarity">
    <text evidence="15">In the N-terminal section; belongs to the class I-like SAM-binding methyltransferase superfamily. mRNA cap 0-1 NS5-type methyltransferase family.</text>
</comment>
<comment type="caution">
    <text evidence="17">The cleavage sites are uncertain because this virus is very divergent from other flaviviruses.</text>
</comment>
<protein>
    <recommendedName>
        <fullName>Genome polyprotein</fullName>
    </recommendedName>
    <component>
        <recommendedName>
            <fullName>Capsid protein C</fullName>
        </recommendedName>
        <alternativeName>
            <fullName>Capsid protein</fullName>
        </alternativeName>
        <alternativeName>
            <fullName>Core protein</fullName>
        </alternativeName>
    </component>
    <component>
        <recommendedName>
            <fullName>Protein prM</fullName>
        </recommendedName>
    </component>
    <component>
        <recommendedName>
            <fullName>Peptide pr</fullName>
        </recommendedName>
    </component>
    <component>
        <recommendedName>
            <fullName>Small envelope protein M</fullName>
        </recommendedName>
        <alternativeName>
            <fullName>Matrix protein</fullName>
        </alternativeName>
    </component>
    <component>
        <recommendedName>
            <fullName>Envelope protein E</fullName>
        </recommendedName>
    </component>
    <component>
        <recommendedName>
            <fullName>Non-structural protein 1</fullName>
            <shortName>NS1</shortName>
        </recommendedName>
    </component>
    <component>
        <recommendedName>
            <fullName>Non-structural protein 2A</fullName>
            <shortName>NS2A</shortName>
        </recommendedName>
    </component>
    <component>
        <recommendedName>
            <fullName>Serine protease subunit NS2B</fullName>
        </recommendedName>
        <alternativeName>
            <fullName>Flavivirin protease NS2B regulatory subunit</fullName>
        </alternativeName>
        <alternativeName>
            <fullName>Non-structural protein 2B</fullName>
        </alternativeName>
    </component>
    <component>
        <recommendedName>
            <fullName>Serine protease NS3</fullName>
            <ecNumber>3.4.21.91</ecNumber>
            <ecNumber>3.6.1.15</ecNumber>
            <ecNumber>3.6.4.13</ecNumber>
        </recommendedName>
        <alternativeName>
            <fullName>Flavivirin protease NS3 catalytic subunit</fullName>
        </alternativeName>
        <alternativeName>
            <fullName>Non-structural protein 3</fullName>
        </alternativeName>
    </component>
    <component>
        <recommendedName>
            <fullName>Non-structural protein 4A</fullName>
            <shortName>NS4A</shortName>
        </recommendedName>
    </component>
    <component>
        <recommendedName>
            <fullName>Peptide 2k</fullName>
        </recommendedName>
    </component>
    <component>
        <recommendedName>
            <fullName>Non-structural protein 4B</fullName>
            <shortName>NS4B</shortName>
        </recommendedName>
    </component>
    <component>
        <recommendedName>
            <fullName>RNA-directed RNA polymerase NS5</fullName>
            <ecNumber evidence="15">2.1.1.56</ecNumber>
            <ecNumber evidence="15">2.1.1.57</ecNumber>
            <ecNumber evidence="10">2.7.7.48</ecNumber>
        </recommendedName>
        <alternativeName>
            <fullName>NS5</fullName>
        </alternativeName>
    </component>
</protein>
<dbReference type="EC" id="3.4.21.91"/>
<dbReference type="EC" id="3.6.1.15"/>
<dbReference type="EC" id="3.6.4.13"/>
<dbReference type="EC" id="2.1.1.56" evidence="15"/>
<dbReference type="EC" id="2.1.1.57" evidence="15"/>
<dbReference type="EC" id="2.7.7.48" evidence="10"/>
<dbReference type="EMBL" id="M91671">
    <property type="protein sequence ID" value="AAA48509.1"/>
    <property type="molecule type" value="Genomic_RNA"/>
</dbReference>
<dbReference type="PIR" id="A42996">
    <property type="entry name" value="A42996"/>
</dbReference>
<dbReference type="SMR" id="P33515"/>
<dbReference type="Proteomes" id="UP000008238">
    <property type="component" value="Segment"/>
</dbReference>
<dbReference type="GO" id="GO:0005576">
    <property type="term" value="C:extracellular region"/>
    <property type="evidence" value="ECO:0007669"/>
    <property type="project" value="UniProtKB-SubCell"/>
</dbReference>
<dbReference type="GO" id="GO:0044167">
    <property type="term" value="C:host cell endoplasmic reticulum membrane"/>
    <property type="evidence" value="ECO:0007669"/>
    <property type="project" value="UniProtKB-SubCell"/>
</dbReference>
<dbReference type="GO" id="GO:0042025">
    <property type="term" value="C:host cell nucleus"/>
    <property type="evidence" value="ECO:0007669"/>
    <property type="project" value="UniProtKB-SubCell"/>
</dbReference>
<dbReference type="GO" id="GO:0016020">
    <property type="term" value="C:membrane"/>
    <property type="evidence" value="ECO:0007669"/>
    <property type="project" value="UniProtKB-KW"/>
</dbReference>
<dbReference type="GO" id="GO:0019028">
    <property type="term" value="C:viral capsid"/>
    <property type="evidence" value="ECO:0007669"/>
    <property type="project" value="UniProtKB-KW"/>
</dbReference>
<dbReference type="GO" id="GO:0019031">
    <property type="term" value="C:viral envelope"/>
    <property type="evidence" value="ECO:0007669"/>
    <property type="project" value="UniProtKB-KW"/>
</dbReference>
<dbReference type="GO" id="GO:0055036">
    <property type="term" value="C:virion membrane"/>
    <property type="evidence" value="ECO:0007669"/>
    <property type="project" value="UniProtKB-SubCell"/>
</dbReference>
<dbReference type="GO" id="GO:0005524">
    <property type="term" value="F:ATP binding"/>
    <property type="evidence" value="ECO:0007669"/>
    <property type="project" value="UniProtKB-KW"/>
</dbReference>
<dbReference type="GO" id="GO:0016887">
    <property type="term" value="F:ATP hydrolysis activity"/>
    <property type="evidence" value="ECO:0007669"/>
    <property type="project" value="RHEA"/>
</dbReference>
<dbReference type="GO" id="GO:0046872">
    <property type="term" value="F:metal ion binding"/>
    <property type="evidence" value="ECO:0007669"/>
    <property type="project" value="UniProtKB-KW"/>
</dbReference>
<dbReference type="GO" id="GO:0004483">
    <property type="term" value="F:mRNA (nucleoside-2'-O-)-methyltransferase activity"/>
    <property type="evidence" value="ECO:0007669"/>
    <property type="project" value="UniProtKB-EC"/>
</dbReference>
<dbReference type="GO" id="GO:0004482">
    <property type="term" value="F:mRNA 5'-cap (guanine-N7-)-methyltransferase activity"/>
    <property type="evidence" value="ECO:0007669"/>
    <property type="project" value="UniProtKB-EC"/>
</dbReference>
<dbReference type="GO" id="GO:0003723">
    <property type="term" value="F:RNA binding"/>
    <property type="evidence" value="ECO:0007669"/>
    <property type="project" value="UniProtKB-KW"/>
</dbReference>
<dbReference type="GO" id="GO:0003724">
    <property type="term" value="F:RNA helicase activity"/>
    <property type="evidence" value="ECO:0007669"/>
    <property type="project" value="UniProtKB-EC"/>
</dbReference>
<dbReference type="GO" id="GO:0003968">
    <property type="term" value="F:RNA-directed RNA polymerase activity"/>
    <property type="evidence" value="ECO:0007669"/>
    <property type="project" value="UniProtKB-KW"/>
</dbReference>
<dbReference type="GO" id="GO:0004252">
    <property type="term" value="F:serine-type endopeptidase activity"/>
    <property type="evidence" value="ECO:0007669"/>
    <property type="project" value="InterPro"/>
</dbReference>
<dbReference type="GO" id="GO:0046718">
    <property type="term" value="P:symbiont entry into host cell"/>
    <property type="evidence" value="ECO:0007669"/>
    <property type="project" value="UniProtKB-KW"/>
</dbReference>
<dbReference type="GO" id="GO:0039520">
    <property type="term" value="P:symbiont-mediated activation of host autophagy"/>
    <property type="evidence" value="ECO:0007669"/>
    <property type="project" value="UniProtKB-KW"/>
</dbReference>
<dbReference type="GO" id="GO:0042784">
    <property type="term" value="P:symbiont-mediated suppression of host complement activation"/>
    <property type="evidence" value="ECO:0007669"/>
    <property type="project" value="UniProtKB-KW"/>
</dbReference>
<dbReference type="GO" id="GO:0039563">
    <property type="term" value="P:symbiont-mediated suppression of host JAK-STAT cascade via inhibition of STAT1 activity"/>
    <property type="evidence" value="ECO:0007669"/>
    <property type="project" value="UniProtKB-KW"/>
</dbReference>
<dbReference type="GO" id="GO:0039564">
    <property type="term" value="P:symbiont-mediated suppression of host JAK-STAT cascade via inhibition of STAT2 activity"/>
    <property type="evidence" value="ECO:0007669"/>
    <property type="project" value="UniProtKB-KW"/>
</dbReference>
<dbReference type="GO" id="GO:0039502">
    <property type="term" value="P:symbiont-mediated suppression of host type I interferon-mediated signaling pathway"/>
    <property type="evidence" value="ECO:0007669"/>
    <property type="project" value="UniProtKB-KW"/>
</dbReference>
<dbReference type="GO" id="GO:0039694">
    <property type="term" value="P:viral RNA genome replication"/>
    <property type="evidence" value="ECO:0007669"/>
    <property type="project" value="InterPro"/>
</dbReference>
<dbReference type="GO" id="GO:0019062">
    <property type="term" value="P:virion attachment to host cell"/>
    <property type="evidence" value="ECO:0007669"/>
    <property type="project" value="UniProtKB-KW"/>
</dbReference>
<dbReference type="CDD" id="cd20761">
    <property type="entry name" value="capping_2-OMTase_Flaviviridae"/>
    <property type="match status" value="1"/>
</dbReference>
<dbReference type="Gene3D" id="1.10.260.90">
    <property type="match status" value="1"/>
</dbReference>
<dbReference type="Gene3D" id="2.40.10.120">
    <property type="match status" value="1"/>
</dbReference>
<dbReference type="Gene3D" id="3.30.70.2840">
    <property type="entry name" value="Flavivirus RNA-directed RNA polymerase, thumb domain"/>
    <property type="match status" value="2"/>
</dbReference>
<dbReference type="Gene3D" id="3.40.50.300">
    <property type="entry name" value="P-loop containing nucleotide triphosphate hydrolases"/>
    <property type="match status" value="2"/>
</dbReference>
<dbReference type="Gene3D" id="2.40.10.10">
    <property type="entry name" value="Trypsin-like serine proteases"/>
    <property type="match status" value="1"/>
</dbReference>
<dbReference type="Gene3D" id="3.40.50.150">
    <property type="entry name" value="Vaccinia Virus protein VP39"/>
    <property type="match status" value="1"/>
</dbReference>
<dbReference type="Gene3D" id="3.30.387.10">
    <property type="entry name" value="Viral Envelope Glycoprotein, domain 3"/>
    <property type="match status" value="1"/>
</dbReference>
<dbReference type="InterPro" id="IPR043502">
    <property type="entry name" value="DNA/RNA_pol_sf"/>
</dbReference>
<dbReference type="InterPro" id="IPR013755">
    <property type="entry name" value="Flav_gly_cen_dom_subdom1"/>
</dbReference>
<dbReference type="InterPro" id="IPR011492">
    <property type="entry name" value="Flavi_DEAD"/>
</dbReference>
<dbReference type="InterPro" id="IPR001157">
    <property type="entry name" value="Flavi_NS1"/>
</dbReference>
<dbReference type="InterPro" id="IPR001850">
    <property type="entry name" value="Flavi_NS3_S7"/>
</dbReference>
<dbReference type="InterPro" id="IPR046811">
    <property type="entry name" value="Flavi_NS5_thumb"/>
</dbReference>
<dbReference type="InterPro" id="IPR000208">
    <property type="entry name" value="Flavi_RdRp_fingers/palm"/>
</dbReference>
<dbReference type="InterPro" id="IPR014412">
    <property type="entry name" value="Gen_Poly_FLV"/>
</dbReference>
<dbReference type="InterPro" id="IPR036253">
    <property type="entry name" value="Glycoprot_cen/dimer_sf"/>
</dbReference>
<dbReference type="InterPro" id="IPR014001">
    <property type="entry name" value="Helicase_ATP-bd"/>
</dbReference>
<dbReference type="InterPro" id="IPR026490">
    <property type="entry name" value="mRNA_cap_0/1_MeTrfase"/>
</dbReference>
<dbReference type="InterPro" id="IPR049486">
    <property type="entry name" value="NS3-hel_C_flaviviridae"/>
</dbReference>
<dbReference type="InterPro" id="IPR027417">
    <property type="entry name" value="P-loop_NTPase"/>
</dbReference>
<dbReference type="InterPro" id="IPR009003">
    <property type="entry name" value="Peptidase_S1_PA"/>
</dbReference>
<dbReference type="InterPro" id="IPR043504">
    <property type="entry name" value="Peptidase_S1_PA_chymotrypsin"/>
</dbReference>
<dbReference type="InterPro" id="IPR007094">
    <property type="entry name" value="RNA-dir_pol_PSvirus"/>
</dbReference>
<dbReference type="InterPro" id="IPR002877">
    <property type="entry name" value="RNA_MeTrfase_FtsJ_dom"/>
</dbReference>
<dbReference type="InterPro" id="IPR029063">
    <property type="entry name" value="SAM-dependent_MTases_sf"/>
</dbReference>
<dbReference type="Pfam" id="PF20907">
    <property type="entry name" value="Flav_NS3-hel_C"/>
    <property type="match status" value="1"/>
</dbReference>
<dbReference type="Pfam" id="PF07652">
    <property type="entry name" value="Flavi_DEAD"/>
    <property type="match status" value="1"/>
</dbReference>
<dbReference type="Pfam" id="PF00948">
    <property type="entry name" value="Flavi_NS1"/>
    <property type="match status" value="1"/>
</dbReference>
<dbReference type="Pfam" id="PF00972">
    <property type="entry name" value="Flavi_NS5"/>
    <property type="match status" value="1"/>
</dbReference>
<dbReference type="Pfam" id="PF20483">
    <property type="entry name" value="Flavi_NS5_thumb"/>
    <property type="match status" value="1"/>
</dbReference>
<dbReference type="Pfam" id="PF01728">
    <property type="entry name" value="FtsJ"/>
    <property type="match status" value="1"/>
</dbReference>
<dbReference type="Pfam" id="PF00949">
    <property type="entry name" value="Peptidase_S7"/>
    <property type="match status" value="1"/>
</dbReference>
<dbReference type="PIRSF" id="PIRSF003817">
    <property type="entry name" value="Gen_Poly_FLV"/>
    <property type="match status" value="1"/>
</dbReference>
<dbReference type="SMART" id="SM00487">
    <property type="entry name" value="DEXDc"/>
    <property type="match status" value="1"/>
</dbReference>
<dbReference type="SUPFAM" id="SSF56672">
    <property type="entry name" value="DNA/RNA polymerases"/>
    <property type="match status" value="1"/>
</dbReference>
<dbReference type="SUPFAM" id="SSF52540">
    <property type="entry name" value="P-loop containing nucleoside triphosphate hydrolases"/>
    <property type="match status" value="3"/>
</dbReference>
<dbReference type="SUPFAM" id="SSF53335">
    <property type="entry name" value="S-adenosyl-L-methionine-dependent methyltransferases"/>
    <property type="match status" value="1"/>
</dbReference>
<dbReference type="SUPFAM" id="SSF50494">
    <property type="entry name" value="Trypsin-like serine proteases"/>
    <property type="match status" value="1"/>
</dbReference>
<dbReference type="SUPFAM" id="SSF56983">
    <property type="entry name" value="Viral glycoprotein, central and dimerisation domains"/>
    <property type="match status" value="1"/>
</dbReference>
<dbReference type="PROSITE" id="PS51528">
    <property type="entry name" value="FLAVIVIRUS_NS3PRO"/>
    <property type="match status" value="1"/>
</dbReference>
<dbReference type="PROSITE" id="PS51192">
    <property type="entry name" value="HELICASE_ATP_BIND_1"/>
    <property type="match status" value="1"/>
</dbReference>
<dbReference type="PROSITE" id="PS51194">
    <property type="entry name" value="HELICASE_CTER"/>
    <property type="match status" value="1"/>
</dbReference>
<dbReference type="PROSITE" id="PS50507">
    <property type="entry name" value="RDRP_SSRNA_POS"/>
    <property type="match status" value="1"/>
</dbReference>
<dbReference type="PROSITE" id="PS51591">
    <property type="entry name" value="RNA_CAP01_NS5_MT"/>
    <property type="match status" value="1"/>
</dbReference>
<feature type="chain" id="PRO_0000037714" description="Capsid protein C" evidence="2">
    <location>
        <begin position="1"/>
        <end position="116"/>
    </location>
</feature>
<feature type="propeptide" id="PRO_0000441420" description="ER anchor for the capsid protein C, removed in mature form by serine protease NS3" evidence="2">
    <location>
        <begin position="117"/>
        <end position="136"/>
    </location>
</feature>
<feature type="chain" id="PRO_0000441421" description="Protein prM" evidence="5">
    <location>
        <begin position="137"/>
        <end position="278"/>
    </location>
</feature>
<feature type="chain" id="PRO_0000441422" description="Peptide pr" evidence="5">
    <location>
        <begin position="137"/>
        <end position="221"/>
    </location>
</feature>
<feature type="chain" id="PRO_0000037715" description="Small envelope protein M" evidence="9">
    <location>
        <begin position="222"/>
        <end position="278"/>
    </location>
</feature>
<feature type="chain" id="PRO_0000037716" description="Envelope protein E" evidence="5">
    <location>
        <begin position="279"/>
        <end position="705"/>
    </location>
</feature>
<feature type="chain" id="PRO_0000037717" description="Non-structural protein 1" evidence="2">
    <location>
        <begin position="706"/>
        <end position="1095"/>
    </location>
</feature>
<feature type="chain" id="PRO_0000037718" description="Non-structural protein 2A" evidence="5">
    <location>
        <begin position="1096"/>
        <end position="1327"/>
    </location>
</feature>
<feature type="chain" id="PRO_0000037719" description="Serine protease subunit NS2B" evidence="2">
    <location>
        <begin position="1328"/>
        <end position="1451"/>
    </location>
</feature>
<feature type="chain" id="PRO_0000037720" description="Serine protease NS3" evidence="2">
    <location>
        <begin position="1452"/>
        <end position="2038"/>
    </location>
</feature>
<feature type="chain" id="PRO_0000037721" description="Non-structural protein 4A" evidence="2">
    <location>
        <begin position="2039"/>
        <end position="2173"/>
    </location>
</feature>
<feature type="peptide" id="PRO_0000441423" description="Peptide 2k" evidence="2">
    <location>
        <begin position="2174"/>
        <end position="2199"/>
    </location>
</feature>
<feature type="chain" id="PRO_0000037722" description="Non-structural protein 4B" evidence="2">
    <location>
        <begin position="2200"/>
        <end position="2457"/>
    </location>
</feature>
<feature type="chain" id="PRO_0000037723" description="RNA-directed RNA polymerase NS5" evidence="2">
    <location>
        <begin position="2458"/>
        <end position="3341"/>
    </location>
</feature>
<feature type="topological domain" description="Cytoplasmic" evidence="9">
    <location>
        <begin position="1"/>
        <end position="120"/>
    </location>
</feature>
<feature type="transmembrane region" description="Helical" evidence="9">
    <location>
        <begin position="121"/>
        <end position="141"/>
    </location>
</feature>
<feature type="topological domain" description="Extracellular" evidence="9">
    <location>
        <begin position="142"/>
        <end position="245"/>
    </location>
</feature>
<feature type="transmembrane region" description="Helical" evidence="17">
    <location>
        <begin position="246"/>
        <end position="262"/>
    </location>
</feature>
<feature type="topological domain" description="Cytoplasmic" evidence="17">
    <location>
        <position position="263"/>
    </location>
</feature>
<feature type="transmembrane region" description="Helical" evidence="17">
    <location>
        <begin position="264"/>
        <end position="278"/>
    </location>
</feature>
<feature type="topological domain" description="Extracellular" evidence="9">
    <location>
        <begin position="279"/>
        <end position="665"/>
    </location>
</feature>
<feature type="transmembrane region" description="Helical" evidence="9">
    <location>
        <begin position="666"/>
        <end position="686"/>
    </location>
</feature>
<feature type="topological domain" description="Cytoplasmic" evidence="9">
    <location>
        <begin position="687"/>
        <end position="689"/>
    </location>
</feature>
<feature type="transmembrane region" description="Helical" evidence="9">
    <location>
        <begin position="690"/>
        <end position="705"/>
    </location>
</feature>
<feature type="topological domain" description="Extracellular" evidence="9">
    <location>
        <begin position="706"/>
        <end position="1138"/>
    </location>
</feature>
<feature type="transmembrane region" description="Helical" evidence="9">
    <location>
        <begin position="1139"/>
        <end position="1159"/>
    </location>
</feature>
<feature type="topological domain" description="Cytoplasmic" evidence="9">
    <location>
        <begin position="1160"/>
        <end position="1178"/>
    </location>
</feature>
<feature type="transmembrane region" description="Helical" evidence="9">
    <location>
        <begin position="1179"/>
        <end position="1199"/>
    </location>
</feature>
<feature type="topological domain" description="Lumenal" evidence="9">
    <location>
        <begin position="1200"/>
        <end position="1204"/>
    </location>
</feature>
<feature type="transmembrane region" description="Helical" evidence="9">
    <location>
        <begin position="1205"/>
        <end position="1225"/>
    </location>
</feature>
<feature type="topological domain" description="Cytoplasmic" evidence="9">
    <location>
        <begin position="1226"/>
        <end position="1231"/>
    </location>
</feature>
<feature type="transmembrane region" description="Helical" evidence="9">
    <location>
        <begin position="1232"/>
        <end position="1252"/>
    </location>
</feature>
<feature type="topological domain" description="Lumenal" evidence="9">
    <location>
        <begin position="1253"/>
        <end position="1261"/>
    </location>
</feature>
<feature type="transmembrane region" description="Helical" evidence="9">
    <location>
        <begin position="1262"/>
        <end position="1282"/>
    </location>
</feature>
<feature type="topological domain" description="Cytoplasmic" evidence="9">
    <location>
        <begin position="1283"/>
        <end position="1303"/>
    </location>
</feature>
<feature type="transmembrane region" description="Helical" evidence="9">
    <location>
        <begin position="1304"/>
        <end position="1324"/>
    </location>
</feature>
<feature type="topological domain" description="Lumenal" evidence="9">
    <location>
        <begin position="1325"/>
        <end position="1326"/>
    </location>
</feature>
<feature type="transmembrane region" description="Helical" evidence="9">
    <location>
        <begin position="1327"/>
        <end position="1347"/>
    </location>
</feature>
<feature type="topological domain" description="Cytoplasmic" evidence="9">
    <location>
        <begin position="1348"/>
        <end position="1403"/>
    </location>
</feature>
<feature type="intramembrane region" description="Helical" evidence="9">
    <location>
        <begin position="1404"/>
        <end position="1424"/>
    </location>
</feature>
<feature type="topological domain" description="Cytoplasmic" evidence="9">
    <location>
        <begin position="1425"/>
        <end position="2089"/>
    </location>
</feature>
<feature type="transmembrane region" description="Helical" evidence="9">
    <location>
        <begin position="2090"/>
        <end position="2110"/>
    </location>
</feature>
<feature type="topological domain" description="Lumenal" evidence="9">
    <location>
        <begin position="2111"/>
        <end position="2145"/>
    </location>
</feature>
<feature type="transmembrane region" description="Helical" evidence="9">
    <location>
        <begin position="2146"/>
        <end position="2166"/>
    </location>
</feature>
<feature type="topological domain" description="Cytoplasmic" evidence="9">
    <location>
        <begin position="2167"/>
        <end position="2178"/>
    </location>
</feature>
<feature type="transmembrane region" description="Helical; Note=Signal for NS4" evidence="9">
    <location>
        <begin position="2179"/>
        <end position="2199"/>
    </location>
</feature>
<feature type="topological domain" description="Lumenal" evidence="9">
    <location>
        <begin position="2200"/>
        <end position="2242"/>
    </location>
</feature>
<feature type="transmembrane region" description="Helical" evidence="9">
    <location>
        <begin position="2243"/>
        <end position="2263"/>
    </location>
</feature>
<feature type="topological domain" description="Cytoplasmic" evidence="9">
    <location>
        <begin position="2264"/>
        <end position="2302"/>
    </location>
</feature>
<feature type="intramembrane region" description="Helical" evidence="9">
    <location>
        <begin position="2303"/>
        <end position="2323"/>
    </location>
</feature>
<feature type="topological domain" description="Cytoplasmic" evidence="9">
    <location>
        <begin position="2324"/>
        <end position="2366"/>
    </location>
</feature>
<feature type="transmembrane region" description="Helical" evidence="9">
    <location>
        <begin position="2367"/>
        <end position="2387"/>
    </location>
</feature>
<feature type="topological domain" description="Lumenal" evidence="9">
    <location>
        <begin position="2388"/>
        <end position="2412"/>
    </location>
</feature>
<feature type="transmembrane region" description="Helical" evidence="9">
    <location>
        <begin position="2413"/>
        <end position="2433"/>
    </location>
</feature>
<feature type="topological domain" description="Cytoplasmic" evidence="9">
    <location>
        <begin position="2434"/>
        <end position="3341"/>
    </location>
</feature>
<feature type="domain" description="Peptidase S7" evidence="14">
    <location>
        <begin position="1452"/>
        <end position="1630"/>
    </location>
</feature>
<feature type="domain" description="Helicase ATP-binding" evidence="11">
    <location>
        <begin position="1627"/>
        <end position="1780"/>
    </location>
</feature>
<feature type="domain" description="Helicase C-terminal" evidence="12">
    <location>
        <begin position="1793"/>
        <end position="1947"/>
    </location>
</feature>
<feature type="domain" description="mRNA cap 0-1 NS5-type MT" evidence="15">
    <location>
        <begin position="2454"/>
        <end position="2706"/>
    </location>
</feature>
<feature type="domain" description="RdRp catalytic" evidence="10">
    <location>
        <begin position="2970"/>
        <end position="3117"/>
    </location>
</feature>
<feature type="region of interest" description="Disordered" evidence="16">
    <location>
        <begin position="1"/>
        <end position="57"/>
    </location>
</feature>
<feature type="region of interest" description="Hydrophobic; homodimerization of capsid protein C" evidence="5">
    <location>
        <begin position="55"/>
        <end position="97"/>
    </location>
</feature>
<feature type="region of interest" description="Involved in fusion" evidence="1">
    <location>
        <begin position="371"/>
        <end position="384"/>
    </location>
</feature>
<feature type="short sequence motif" description="DECH box">
    <location>
        <begin position="1729"/>
        <end position="1732"/>
    </location>
</feature>
<feature type="compositionally biased region" description="Basic and acidic residues" evidence="16">
    <location>
        <begin position="1"/>
        <end position="14"/>
    </location>
</feature>
<feature type="compositionally biased region" description="Basic and acidic residues" evidence="16">
    <location>
        <begin position="24"/>
        <end position="35"/>
    </location>
</feature>
<feature type="compositionally biased region" description="Polar residues" evidence="16">
    <location>
        <begin position="37"/>
        <end position="50"/>
    </location>
</feature>
<feature type="active site" description="Charge relay system; for serine protease NS3 activity" evidence="14">
    <location>
        <position position="1506"/>
    </location>
</feature>
<feature type="active site" description="Charge relay system; for serine protease NS3 activity" evidence="14">
    <location>
        <position position="1530"/>
    </location>
</feature>
<feature type="active site" description="Charge relay system; for serine protease NS3 activity" evidence="14">
    <location>
        <position position="1589"/>
    </location>
</feature>
<feature type="active site" description="For 2'-O-MTase activity" evidence="7">
    <location>
        <position position="2509"/>
    </location>
</feature>
<feature type="active site" description="For 2'-O-MTase activity" evidence="7">
    <location>
        <position position="2587"/>
    </location>
</feature>
<feature type="active site" description="For 2'-O-MTase activity" evidence="7">
    <location>
        <position position="2624"/>
    </location>
</feature>
<feature type="active site" description="For 2'-O-MTase activity" evidence="7">
    <location>
        <position position="2660"/>
    </location>
</feature>
<feature type="binding site" evidence="11">
    <location>
        <begin position="1640"/>
        <end position="1647"/>
    </location>
    <ligand>
        <name>ATP</name>
        <dbReference type="ChEBI" id="CHEBI:30616"/>
    </ligand>
</feature>
<feature type="binding site" evidence="15">
    <location>
        <position position="2497"/>
    </location>
    <ligand>
        <name>S-adenosyl-L-methionine</name>
        <dbReference type="ChEBI" id="CHEBI:59789"/>
    </ligand>
</feature>
<feature type="binding site" evidence="15">
    <location>
        <position position="2527"/>
    </location>
    <ligand>
        <name>S-adenosyl-L-methionine</name>
        <dbReference type="ChEBI" id="CHEBI:59789"/>
    </ligand>
</feature>
<feature type="binding site" evidence="15">
    <location>
        <position position="2528"/>
    </location>
    <ligand>
        <name>S-adenosyl-L-methionine</name>
        <dbReference type="ChEBI" id="CHEBI:59789"/>
    </ligand>
</feature>
<feature type="binding site" evidence="15">
    <location>
        <position position="2545"/>
    </location>
    <ligand>
        <name>S-adenosyl-L-methionine</name>
        <dbReference type="ChEBI" id="CHEBI:59789"/>
    </ligand>
</feature>
<feature type="binding site" evidence="15">
    <location>
        <position position="2546"/>
    </location>
    <ligand>
        <name>S-adenosyl-L-methionine</name>
        <dbReference type="ChEBI" id="CHEBI:59789"/>
    </ligand>
</feature>
<feature type="binding site" evidence="15">
    <location>
        <position position="2572"/>
    </location>
    <ligand>
        <name>S-adenosyl-L-methionine</name>
        <dbReference type="ChEBI" id="CHEBI:59789"/>
    </ligand>
</feature>
<feature type="binding site" evidence="15">
    <location>
        <position position="2573"/>
    </location>
    <ligand>
        <name>S-adenosyl-L-methionine</name>
        <dbReference type="ChEBI" id="CHEBI:59789"/>
    </ligand>
</feature>
<feature type="binding site" evidence="15">
    <location>
        <position position="2588"/>
    </location>
    <ligand>
        <name>S-adenosyl-L-methionine</name>
        <dbReference type="ChEBI" id="CHEBI:59789"/>
    </ligand>
</feature>
<feature type="binding site" evidence="15">
    <location>
        <position position="2662"/>
    </location>
    <ligand>
        <name>S-adenosyl-L-methionine</name>
        <dbReference type="ChEBI" id="CHEBI:59789"/>
    </ligand>
</feature>
<feature type="binding site" evidence="3">
    <location>
        <position position="2881"/>
    </location>
    <ligand>
        <name>Zn(2+)</name>
        <dbReference type="ChEBI" id="CHEBI:29105"/>
        <label>1</label>
    </ligand>
</feature>
<feature type="binding site" evidence="3">
    <location>
        <position position="2885"/>
    </location>
    <ligand>
        <name>Zn(2+)</name>
        <dbReference type="ChEBI" id="CHEBI:29105"/>
        <label>1</label>
    </ligand>
</feature>
<feature type="binding site" evidence="3">
    <location>
        <position position="2890"/>
    </location>
    <ligand>
        <name>Zn(2+)</name>
        <dbReference type="ChEBI" id="CHEBI:29105"/>
        <label>1</label>
    </ligand>
</feature>
<feature type="binding site" evidence="3">
    <location>
        <position position="2893"/>
    </location>
    <ligand>
        <name>Zn(2+)</name>
        <dbReference type="ChEBI" id="CHEBI:29105"/>
        <label>1</label>
    </ligand>
</feature>
<feature type="binding site" evidence="3">
    <location>
        <position position="3152"/>
    </location>
    <ligand>
        <name>Zn(2+)</name>
        <dbReference type="ChEBI" id="CHEBI:29105"/>
        <label>2</label>
    </ligand>
</feature>
<feature type="binding site" evidence="3">
    <location>
        <position position="3168"/>
    </location>
    <ligand>
        <name>Zn(2+)</name>
        <dbReference type="ChEBI" id="CHEBI:29105"/>
        <label>2</label>
    </ligand>
</feature>
<feature type="binding site" evidence="3">
    <location>
        <position position="3287"/>
    </location>
    <ligand>
        <name>Zn(2+)</name>
        <dbReference type="ChEBI" id="CHEBI:29105"/>
        <label>2</label>
    </ligand>
</feature>
<feature type="site" description="Cleavage; by viral protease NS3" evidence="2">
    <location>
        <begin position="116"/>
        <end position="117"/>
    </location>
</feature>
<feature type="site" description="Cleavage; by host signal peptidase" evidence="2">
    <location>
        <begin position="135"/>
        <end position="136"/>
    </location>
</feature>
<feature type="site" description="Cleavage; by host signal peptidase" evidence="2">
    <location>
        <begin position="705"/>
        <end position="706"/>
    </location>
</feature>
<feature type="site" description="Cleavage; by host" evidence="5">
    <location>
        <begin position="1095"/>
        <end position="1096"/>
    </location>
</feature>
<feature type="site" description="Cleavage; by viral protease NS3" evidence="5">
    <location>
        <begin position="1327"/>
        <end position="1328"/>
    </location>
</feature>
<feature type="site" description="Cleavage; by autolysis" evidence="2">
    <location>
        <begin position="1451"/>
        <end position="1452"/>
    </location>
</feature>
<feature type="site" description="Cleavage; by autolysis" evidence="2">
    <location>
        <begin position="2038"/>
        <end position="2039"/>
    </location>
</feature>
<feature type="site" description="Cleavage; by viral protease NS3" evidence="5">
    <location>
        <begin position="2173"/>
        <end position="2174"/>
    </location>
</feature>
<feature type="site" description="Cleavage; by viral protease NS3" evidence="2">
    <location>
        <begin position="2457"/>
        <end position="2458"/>
    </location>
</feature>
<feature type="site" description="mRNA cap binding" evidence="15">
    <location>
        <position position="2468"/>
    </location>
</feature>
<feature type="site" description="mRNA cap binding; via carbonyl oxygen" evidence="15">
    <location>
        <position position="2471"/>
    </location>
</feature>
<feature type="site" description="mRNA cap binding" evidence="15">
    <location>
        <position position="2472"/>
    </location>
</feature>
<feature type="site" description="mRNA cap binding; via carbonyl oxygen" evidence="15">
    <location>
        <position position="2474"/>
    </location>
</feature>
<feature type="site" description="mRNA cap binding" evidence="15">
    <location>
        <position position="2479"/>
    </location>
</feature>
<feature type="site" description="mRNA cap binding" evidence="15">
    <location>
        <position position="2483"/>
    </location>
</feature>
<feature type="site" description="Essential for 2'-O-methyltransferase activity" evidence="15">
    <location>
        <position position="2502"/>
    </location>
</feature>
<feature type="site" description="Essential for 2'-O-methyltransferase and N-7 methyltransferase activity" evidence="15">
    <location>
        <position position="2587"/>
    </location>
</feature>
<feature type="site" description="mRNA cap binding" evidence="15">
    <location>
        <position position="2591"/>
    </location>
</feature>
<feature type="site" description="Essential for 2'-O-methyltransferase activity" evidence="15">
    <location>
        <position position="2624"/>
    </location>
</feature>
<feature type="site" description="mRNA cap binding" evidence="15">
    <location>
        <position position="2655"/>
    </location>
</feature>
<feature type="site" description="mRNA cap binding" evidence="15">
    <location>
        <position position="2657"/>
    </location>
</feature>
<feature type="site" description="Essential for 2'-O-methyltransferase activity" evidence="15">
    <location>
        <position position="2660"/>
    </location>
</feature>
<feature type="glycosylation site" description="N-linked (GlcNAc...) asparagine; by host" evidence="9">
    <location>
        <position position="157"/>
    </location>
</feature>
<feature type="glycosylation site" description="N-linked (GlcNAc...) asparagine; by host" evidence="9">
    <location>
        <position position="243"/>
    </location>
</feature>
<feature type="glycosylation site" description="N-linked (GlcNAc...) asparagine; by host" evidence="9">
    <location>
        <position position="339"/>
    </location>
</feature>
<feature type="glycosylation site" description="N-linked (GlcNAc...) asparagine; by host" evidence="9">
    <location>
        <position position="399"/>
    </location>
</feature>
<feature type="glycosylation site" description="N-linked (GlcNAc...) asparagine; by host" evidence="9">
    <location>
        <position position="411"/>
    </location>
</feature>
<feature type="glycosylation site" description="N-linked (GlcNAc...) asparagine; by host" evidence="9">
    <location>
        <position position="575"/>
    </location>
</feature>
<feature type="glycosylation site" description="N-linked (GlcNAc...) asparagine; by host" evidence="9">
    <location>
        <position position="611"/>
    </location>
</feature>
<feature type="glycosylation site" description="N-linked (GlcNAc...) asparagine; by host" evidence="9">
    <location>
        <position position="794"/>
    </location>
</feature>
<feature type="glycosylation site" description="N-linked (GlcNAc...) asparagine; by host" evidence="9">
    <location>
        <position position="896"/>
    </location>
</feature>
<feature type="glycosylation site" description="N-linked (GlcNAc...) asparagine; by host" evidence="9">
    <location>
        <position position="993"/>
    </location>
</feature>
<feature type="glycosylation site" description="N-linked (GlcNAc...) asparagine; by host" evidence="9">
    <location>
        <position position="1027"/>
    </location>
</feature>
<keyword id="KW-1072">Activation of host autophagy by virus</keyword>
<keyword id="KW-0067">ATP-binding</keyword>
<keyword id="KW-0167">Capsid protein</keyword>
<keyword id="KW-0165">Cleavage on pair of basic residues</keyword>
<keyword id="KW-0903">Direct protein sequencing</keyword>
<keyword id="KW-0325">Glycoprotein</keyword>
<keyword id="KW-0347">Helicase</keyword>
<keyword id="KW-1038">Host endoplasmic reticulum</keyword>
<keyword id="KW-1043">Host membrane</keyword>
<keyword id="KW-1048">Host nucleus</keyword>
<keyword id="KW-0945">Host-virus interaction</keyword>
<keyword id="KW-0378">Hydrolase</keyword>
<keyword id="KW-1087">Inhibition of host complement factors by virus</keyword>
<keyword id="KW-1090">Inhibition of host innate immune response by virus</keyword>
<keyword id="KW-1114">Inhibition of host interferon signaling pathway by virus</keyword>
<keyword id="KW-1105">Inhibition of host STAT1 by virus</keyword>
<keyword id="KW-1106">Inhibition of host STAT2 by virus</keyword>
<keyword id="KW-0922">Interferon antiviral system evasion</keyword>
<keyword id="KW-0472">Membrane</keyword>
<keyword id="KW-0479">Metal-binding</keyword>
<keyword id="KW-0489">Methyltransferase</keyword>
<keyword id="KW-0506">mRNA capping</keyword>
<keyword id="KW-0507">mRNA processing</keyword>
<keyword id="KW-0547">Nucleotide-binding</keyword>
<keyword id="KW-0548">Nucleotidyltransferase</keyword>
<keyword id="KW-0694">RNA-binding</keyword>
<keyword id="KW-0696">RNA-directed RNA polymerase</keyword>
<keyword id="KW-0949">S-adenosyl-L-methionine</keyword>
<keyword id="KW-0964">Secreted</keyword>
<keyword id="KW-0808">Transferase</keyword>
<keyword id="KW-0812">Transmembrane</keyword>
<keyword id="KW-1133">Transmembrane helix</keyword>
<keyword id="KW-1161">Viral attachment to host cell</keyword>
<keyword id="KW-0261">Viral envelope protein</keyword>
<keyword id="KW-0899">Viral immunoevasion</keyword>
<keyword id="KW-0693">Viral RNA replication</keyword>
<keyword id="KW-0946">Virion</keyword>
<keyword id="KW-1160">Virus entry into host cell</keyword>
<keyword id="KW-0862">Zinc</keyword>
<reference key="1">
    <citation type="journal article" date="1992" name="Virology">
        <title>The complete nucleotide sequence of cell fusing agent (CFA): homology between the nonstructural proteins encoded by CFA and the nonstructural proteins encoded by arthropod-borne flaviviruses.</title>
        <authorList>
            <person name="Cammisa-Parks H."/>
            <person name="Cisar L.A."/>
            <person name="Kane A."/>
            <person name="Stollar V."/>
        </authorList>
    </citation>
    <scope>NUCLEOTIDE SEQUENCE [GENOMIC RNA]</scope>
    <scope>PARTIAL PROTEIN SEQUENCE</scope>
</reference>
<organismHost>
    <name type="scientific">Aedes</name>
    <dbReference type="NCBI Taxonomy" id="7158"/>
</organismHost>
<accession>P33515</accession>
<proteinExistence type="evidence at protein level"/>
<organism>
    <name type="scientific">Mosquito cell fusing agent</name>
    <name type="common">CFA flavivirus</name>
    <dbReference type="NCBI Taxonomy" id="31658"/>
    <lineage>
        <taxon>Viruses</taxon>
        <taxon>Riboviria</taxon>
        <taxon>Orthornavirae</taxon>
        <taxon>Kitrinoviricota</taxon>
        <taxon>Flasuviricetes</taxon>
        <taxon>Amarillovirales</taxon>
        <taxon>Flaviviridae</taxon>
        <taxon>Orthoflavivirus</taxon>
    </lineage>
</organism>
<name>POLG_MCFA</name>
<evidence type="ECO:0000250" key="1"/>
<evidence type="ECO:0000250" key="2">
    <source>
        <dbReference type="UniProtKB" id="P03314"/>
    </source>
</evidence>
<evidence type="ECO:0000250" key="3">
    <source>
        <dbReference type="UniProtKB" id="P14335"/>
    </source>
</evidence>
<evidence type="ECO:0000250" key="4">
    <source>
        <dbReference type="UniProtKB" id="P17763"/>
    </source>
</evidence>
<evidence type="ECO:0000250" key="5">
    <source>
        <dbReference type="UniProtKB" id="P29990"/>
    </source>
</evidence>
<evidence type="ECO:0000250" key="6">
    <source>
        <dbReference type="UniProtKB" id="Q01299"/>
    </source>
</evidence>
<evidence type="ECO:0000250" key="7">
    <source>
        <dbReference type="UniProtKB" id="Q6YMS4"/>
    </source>
</evidence>
<evidence type="ECO:0000250" key="8">
    <source>
        <dbReference type="UniProtKB" id="Q9Q6P4"/>
    </source>
</evidence>
<evidence type="ECO:0000255" key="9"/>
<evidence type="ECO:0000255" key="10">
    <source>
        <dbReference type="PROSITE-ProRule" id="PRU00539"/>
    </source>
</evidence>
<evidence type="ECO:0000255" key="11">
    <source>
        <dbReference type="PROSITE-ProRule" id="PRU00541"/>
    </source>
</evidence>
<evidence type="ECO:0000255" key="12">
    <source>
        <dbReference type="PROSITE-ProRule" id="PRU00542"/>
    </source>
</evidence>
<evidence type="ECO:0000255" key="13">
    <source>
        <dbReference type="PROSITE-ProRule" id="PRU00859"/>
    </source>
</evidence>
<evidence type="ECO:0000255" key="14">
    <source>
        <dbReference type="PROSITE-ProRule" id="PRU00860"/>
    </source>
</evidence>
<evidence type="ECO:0000255" key="15">
    <source>
        <dbReference type="PROSITE-ProRule" id="PRU00924"/>
    </source>
</evidence>
<evidence type="ECO:0000256" key="16">
    <source>
        <dbReference type="SAM" id="MobiDB-lite"/>
    </source>
</evidence>
<evidence type="ECO:0000305" key="17"/>
<sequence>MKRKDLEARGKAPGRDSSTPFWGREGRRKDKDKGGESPSNRQVTLKTPIQSGRRAGKRQRVGLLGRLGVGWGSFLQEDIVQALIHMALVLHALFASIDRRIRSLSRRVTALESRRTTGNPMTLAFILGFLTVLCGCVVIDMQVSTTRGTEIFEGETNRTDYLHLLKLPADGCWSGILVTKKCPKVTDLAKDLESTDCGSTWTEFTLRYRRCVVKKREKRSREPPKADLLAEMEIIAFKTIRENKTIFIVALLCVAIAKRWPTWVVILLAIGTWTTVKGEFVEPLYTLKAEQMTMLQTIVRPEEGYVVATPNGLLEFKTGPAEIYGGQWLRELLADCHVNASYSTDVCPGGSQLNMADIMAKERVCSTQPYNRGWGTGCFKWGIGFVGTCVELHCDRGFNVSSIARSAIVMNVTASFHSVSDTQQMVGDIPLTFRFAKLGNAAMTCRLESEQLLLDYYHVTGSSHEGLFLRSQVDSWPGVHSTASGRHGMEKVVVWGDARSNEILVKNVIEPSLSWEDAIATHGGFRDISFVCQIMLDKLVSGAFRDCPGPKISTFSQDGFGYSGVVITTLTASSNETCSLSLTCHGCLLQSTKMIFLAGKTTSRAFVKCGNHTSTLLVGSTSVSIECALNPISQGWRLARHVVDRYRRFGVSGVAGVWQDLVGKFSVGAFFSNTALLVILVLAALIDKRIAFLLVLGGYFYYVRADLGCGIDTTRKTISCGSGVFVWKHLGVGISNDHAVELEDYSFTDLYIKDMFSWTTKPCLICEDALQCVALRRAAFSAVGSMGSERVYVNDTLARTFKFSETAKRTISVTINLIQYKFSSYVAHGRAEGDLGLLPTMYGSYPEKEADKVIRIVASRPDIRRLCGKAVSFQFKFTGFRRGLYGSNVQVEVSKNSSTECPTYLAGVAVKNGRTVITDGMFWMESIVLDGVAQITSLEMRQSHRCVWPREYTPDTLSDPSDQALFIPPAWGGPISRVNHIIGYKTQTDFPWNVSDITLIEGPAPGTKVKVDSRCHGRMHAQVIGPNDTESWCCQSCTRIVHFRVGDLLYYPMEIQLGTMSEASEPNSKIFEEPIGEEPEPTVDDILKRYGKANAQSDFRRVSQRAGVWFDRSLLNLLCLAISLQLIGAKTRTSTLTRLFLTILAMALFGLPNLFSSVGLSAWVLLVASSSAQPQDLSMNLWIVLQTGSSAVLLLGYMIRRKLAMVLGVHHLVTLMCVQFLFSAVDRYQKYLYGLLELMASVVLLSAYKSVLQALPPEVLCFSLVMGWKTALSLATVVFLIFSLNAMYKYACQYHNPRNGYRDSGANLWFWTVSLASAGGIWAAEKAHQPTVAAVLAFTMVVLFLYMEQTNVSMELEFISAGETPEGVSTENDDGINIPDLKGRYGEDGIVVGAASSSGYLPELVFVFLLGFAVTSTSYFLGALYLLIATSTNLPVVIIRMLRMKLTASNRSDDLLGLGGPVETDLQTSFQDIPNGVYRIVVRSLFGDRQRGAGFSKNGVFHTLMHVTRGEPVKWRGRVVVPHSGSALRDVVSYGGPWQLDTPTTTEDLVLMACKPDKTIEYHRYRPGVMSIDGEPVMFISDDFGKGSSGSPFFINGEPVGFYGFGFYVNGIYRSTVAGGKPTDVTESLNCDSTRRFVTWHPGKGKTRKVIVEETKKNYDSNQRTVILTPTRVVMAEVVEALNNSGMRSDKNLSYCTRNLITVACHATFTKFVLSHGAKKVRVAMIIMDECHFMDPMSIAARGILEHLHGQGTKLIYLSATPPGHAPDTGSNYAISDQSISFPTWLSPAWIGNVQKSVGAKKTILFVPSHNQANTLASAIPGSVPLHRANFSSNYAQAGDAATALVISTDISEMGANLGVDLVIDTRRALRPLVDSATRVKLVETNITTSSMIQRRGRTGRREPGTYVYPIDSQTEENPVSWVCWPEAQMILDQLGMTFMLEEAAYSQPPGRFTLVGEDRMRFLKLMDRDDIPIWLAWHWAEAGDRRHSALFQGAGTGKIIENRFGKQEYRPQYVDDRFESIEWETRKVSIDFYMNCRGGPTLYEFFTVVDWTDIWRRTASALWDLSDVMNGEVRDRYTTERSLTVVMAFVLGVSIMLSCFIAVWALCFLFSLFRPKKATYEQMPSSDPLSGGVLVSTPSVLYCMGVPLGFCVVITLAMFLVYPVLYKSIGNRSYMDSDLVKWVILGSCLICGVLAWEMRMFPNIRSDLMELVKAVKEPEEVVNSGPSFPSWEIAQGKGATMLDSLQVFFFITVLSTKFLYWFQENWTARMYAMKHPEMVSSIGGFRFDEIPFRAVLPSGFAIVAIASLPSVVVGLLAAGVFMAIMYCQNKWNATPKILTALDARDQRHDRPTEITSRVPLENTRSIMYAFCLIFSLFWAFCTRSPGDFLRGSLVVGASMWQILHPRSKIHDVMDFGSMVSAIGLLEMNYLFYRFMHIAARALGAVAPFNQFRALEKSTTIGLGMKWKMTLNALDGDAFTRYKSRGVNETERGDYVSRGGLKLNEIISKYEWRPSGRVVDLGCGRGGWSQRAVMEETVSSALGFTIGGAEKENPQRFVTKGYNLATLKTGVDVHRLTPFRCDTIMCDIGESDPSPIKEKTRTLKVLQLLENWLLVNPGAHFVCKILSPYSLEVLRKIESLQHLYNGRLVRLSHSRNSSVEMYYISGARSNVVRTTYMTLAALMARFSRHLDSVVLPSPVLPKGTRADPAASVASMNTSDMMDRVERLMNENRGTWFEDQQHPYKSFKYFGSFVTDDVKVGGQAVNPLVRKIMWPWETLTSVVGFSMTDVSTYSQQKVLREKVDTVIPPHPQHIRRVNRTITKHFIRLFKNRNLRPRILSKEEFVANVRNDAAVGSWSRDVPWRDVQEAIQDQCFWDLVGKERALHLQGKCEMCIYNTMGKKEKKPSLAGEAKGSRTIWYMWLGSRFLEFEALGFLNADHWVSREHFPGGVGGVGVNYFGYYLKDIASRGKYLIADDIAGWDTKISEEDLEDEEALLTALTEDPYHRALMAATMRLAYQNIVAMFPRTHSKYGSGTVMDVVGRRDQRGSGQVVTYALNTITNGKVQVARVLESEGLLQADESVLDAWLEKHLEEALGNMVIAGDDVVVSTDNRDFSSALEYLELTGKTRKNVPQGAPSRMESNWEKVEFCSHHYHEMSLKDGRIIIAPCRHENEVLGRSRLQKGGVVSISESACMAKAYAQMWALYYFHRRDLRLGFIAISSAVPTNWFPLGRTSWSVHQYHEWMTTDDMLRVWNDVWVHNNPWMLNKESIESWDDIPYLHKKQDITCGSLIGVKERATWAREIENSVISVRRIIDAETGVLNTYKDELSVMSRYRRGNDVI</sequence>